<organism>
    <name type="scientific">Arthrobacter sp. (strain FB24)</name>
    <dbReference type="NCBI Taxonomy" id="290399"/>
    <lineage>
        <taxon>Bacteria</taxon>
        <taxon>Bacillati</taxon>
        <taxon>Actinomycetota</taxon>
        <taxon>Actinomycetes</taxon>
        <taxon>Micrococcales</taxon>
        <taxon>Micrococcaceae</taxon>
        <taxon>Arthrobacter</taxon>
    </lineage>
</organism>
<protein>
    <recommendedName>
        <fullName evidence="1">ATP synthase subunit alpha</fullName>
        <ecNumber evidence="1">7.1.2.2</ecNumber>
    </recommendedName>
    <alternativeName>
        <fullName evidence="1">ATP synthase F1 sector subunit alpha</fullName>
    </alternativeName>
    <alternativeName>
        <fullName evidence="1">F-ATPase subunit alpha</fullName>
    </alternativeName>
</protein>
<feature type="chain" id="PRO_0000339017" description="ATP synthase subunit alpha">
    <location>
        <begin position="1"/>
        <end position="545"/>
    </location>
</feature>
<feature type="binding site" evidence="1">
    <location>
        <begin position="173"/>
        <end position="180"/>
    </location>
    <ligand>
        <name>ATP</name>
        <dbReference type="ChEBI" id="CHEBI:30616"/>
    </ligand>
</feature>
<feature type="site" description="Required for activity" evidence="1">
    <location>
        <position position="374"/>
    </location>
</feature>
<dbReference type="EC" id="7.1.2.2" evidence="1"/>
<dbReference type="EMBL" id="CP000454">
    <property type="protein sequence ID" value="ABK03986.1"/>
    <property type="status" value="ALT_INIT"/>
    <property type="molecule type" value="Genomic_DNA"/>
</dbReference>
<dbReference type="RefSeq" id="WP_011692448.1">
    <property type="nucleotide sequence ID" value="NC_008541.1"/>
</dbReference>
<dbReference type="SMR" id="A0JY66"/>
<dbReference type="STRING" id="290399.Arth_2607"/>
<dbReference type="KEGG" id="art:Arth_2607"/>
<dbReference type="eggNOG" id="COG0056">
    <property type="taxonomic scope" value="Bacteria"/>
</dbReference>
<dbReference type="HOGENOM" id="CLU_010091_2_1_11"/>
<dbReference type="OrthoDB" id="9803053at2"/>
<dbReference type="Proteomes" id="UP000000754">
    <property type="component" value="Chromosome"/>
</dbReference>
<dbReference type="GO" id="GO:0005886">
    <property type="term" value="C:plasma membrane"/>
    <property type="evidence" value="ECO:0007669"/>
    <property type="project" value="UniProtKB-SubCell"/>
</dbReference>
<dbReference type="GO" id="GO:0045259">
    <property type="term" value="C:proton-transporting ATP synthase complex"/>
    <property type="evidence" value="ECO:0007669"/>
    <property type="project" value="UniProtKB-KW"/>
</dbReference>
<dbReference type="GO" id="GO:0043531">
    <property type="term" value="F:ADP binding"/>
    <property type="evidence" value="ECO:0007669"/>
    <property type="project" value="TreeGrafter"/>
</dbReference>
<dbReference type="GO" id="GO:0005524">
    <property type="term" value="F:ATP binding"/>
    <property type="evidence" value="ECO:0007669"/>
    <property type="project" value="UniProtKB-UniRule"/>
</dbReference>
<dbReference type="GO" id="GO:0046933">
    <property type="term" value="F:proton-transporting ATP synthase activity, rotational mechanism"/>
    <property type="evidence" value="ECO:0007669"/>
    <property type="project" value="UniProtKB-UniRule"/>
</dbReference>
<dbReference type="CDD" id="cd18113">
    <property type="entry name" value="ATP-synt_F1_alpha_C"/>
    <property type="match status" value="1"/>
</dbReference>
<dbReference type="CDD" id="cd18116">
    <property type="entry name" value="ATP-synt_F1_alpha_N"/>
    <property type="match status" value="1"/>
</dbReference>
<dbReference type="CDD" id="cd01132">
    <property type="entry name" value="F1-ATPase_alpha_CD"/>
    <property type="match status" value="1"/>
</dbReference>
<dbReference type="FunFam" id="1.20.150.20:FF:000001">
    <property type="entry name" value="ATP synthase subunit alpha"/>
    <property type="match status" value="1"/>
</dbReference>
<dbReference type="FunFam" id="3.40.50.300:FF:000002">
    <property type="entry name" value="ATP synthase subunit alpha"/>
    <property type="match status" value="1"/>
</dbReference>
<dbReference type="Gene3D" id="2.40.30.20">
    <property type="match status" value="1"/>
</dbReference>
<dbReference type="Gene3D" id="1.20.150.20">
    <property type="entry name" value="ATP synthase alpha/beta chain, C-terminal domain"/>
    <property type="match status" value="1"/>
</dbReference>
<dbReference type="Gene3D" id="3.40.50.300">
    <property type="entry name" value="P-loop containing nucleotide triphosphate hydrolases"/>
    <property type="match status" value="1"/>
</dbReference>
<dbReference type="HAMAP" id="MF_01346">
    <property type="entry name" value="ATP_synth_alpha_bact"/>
    <property type="match status" value="1"/>
</dbReference>
<dbReference type="InterPro" id="IPR023366">
    <property type="entry name" value="ATP_synth_asu-like_sf"/>
</dbReference>
<dbReference type="InterPro" id="IPR000793">
    <property type="entry name" value="ATP_synth_asu_C"/>
</dbReference>
<dbReference type="InterPro" id="IPR038376">
    <property type="entry name" value="ATP_synth_asu_C_sf"/>
</dbReference>
<dbReference type="InterPro" id="IPR033732">
    <property type="entry name" value="ATP_synth_F1_a_nt-bd_dom"/>
</dbReference>
<dbReference type="InterPro" id="IPR005294">
    <property type="entry name" value="ATP_synth_F1_asu"/>
</dbReference>
<dbReference type="InterPro" id="IPR020003">
    <property type="entry name" value="ATPase_a/bsu_AS"/>
</dbReference>
<dbReference type="InterPro" id="IPR004100">
    <property type="entry name" value="ATPase_F1/V1/A1_a/bsu_N"/>
</dbReference>
<dbReference type="InterPro" id="IPR036121">
    <property type="entry name" value="ATPase_F1/V1/A1_a/bsu_N_sf"/>
</dbReference>
<dbReference type="InterPro" id="IPR000194">
    <property type="entry name" value="ATPase_F1/V1/A1_a/bsu_nucl-bd"/>
</dbReference>
<dbReference type="InterPro" id="IPR027417">
    <property type="entry name" value="P-loop_NTPase"/>
</dbReference>
<dbReference type="NCBIfam" id="TIGR00962">
    <property type="entry name" value="atpA"/>
    <property type="match status" value="1"/>
</dbReference>
<dbReference type="NCBIfam" id="NF009884">
    <property type="entry name" value="PRK13343.1"/>
    <property type="match status" value="1"/>
</dbReference>
<dbReference type="PANTHER" id="PTHR48082">
    <property type="entry name" value="ATP SYNTHASE SUBUNIT ALPHA, MITOCHONDRIAL"/>
    <property type="match status" value="1"/>
</dbReference>
<dbReference type="PANTHER" id="PTHR48082:SF2">
    <property type="entry name" value="ATP SYNTHASE SUBUNIT ALPHA, MITOCHONDRIAL"/>
    <property type="match status" value="1"/>
</dbReference>
<dbReference type="Pfam" id="PF00006">
    <property type="entry name" value="ATP-synt_ab"/>
    <property type="match status" value="1"/>
</dbReference>
<dbReference type="Pfam" id="PF00306">
    <property type="entry name" value="ATP-synt_ab_C"/>
    <property type="match status" value="1"/>
</dbReference>
<dbReference type="Pfam" id="PF02874">
    <property type="entry name" value="ATP-synt_ab_N"/>
    <property type="match status" value="1"/>
</dbReference>
<dbReference type="SUPFAM" id="SSF47917">
    <property type="entry name" value="C-terminal domain of alpha and beta subunits of F1 ATP synthase"/>
    <property type="match status" value="1"/>
</dbReference>
<dbReference type="SUPFAM" id="SSF50615">
    <property type="entry name" value="N-terminal domain of alpha and beta subunits of F1 ATP synthase"/>
    <property type="match status" value="1"/>
</dbReference>
<dbReference type="SUPFAM" id="SSF52540">
    <property type="entry name" value="P-loop containing nucleoside triphosphate hydrolases"/>
    <property type="match status" value="1"/>
</dbReference>
<dbReference type="PROSITE" id="PS00152">
    <property type="entry name" value="ATPASE_ALPHA_BETA"/>
    <property type="match status" value="1"/>
</dbReference>
<reference key="1">
    <citation type="journal article" date="2013" name="Stand. Genomic Sci.">
        <title>Complete genome sequence of Arthrobacter sp. strain FB24.</title>
        <authorList>
            <person name="Nakatsu C.H."/>
            <person name="Barabote R."/>
            <person name="Thompson S."/>
            <person name="Bruce D."/>
            <person name="Detter C."/>
            <person name="Brettin T."/>
            <person name="Han C."/>
            <person name="Beasley F."/>
            <person name="Chen W."/>
            <person name="Konopka A."/>
            <person name="Xie G."/>
        </authorList>
    </citation>
    <scope>NUCLEOTIDE SEQUENCE [LARGE SCALE GENOMIC DNA]</scope>
    <source>
        <strain>FB24</strain>
    </source>
</reference>
<sequence>MAELTINADDVRIALNEFAASYEPGNAERVEVGRVTTAGDGIARVEGLPSVMANELLRFEDGTLGLAQNLDVREIGVIVLGDFTGIEEGQEVHRTGQVLSVPVGDAFLGRVVDPLGQPIDDLGEIKAETTRALELQAPGVTQRKSVHEPMQTGLKAIDAMIPIGRGQRQLIIGDRQTGKSAIAIDTIINQKANWASGDVTKQVRCIYVAIGQKASTIAAVRQTLEDNGALEYTTIVASPASDPAGFKYLAPYAGSAIGQHWMYGGKHVLIVFDDLSKQAEAYRAVSLLLRRPPGREAYPGDVFYLHSRLLERCAKLSDELGAGSMTGLPLIETKANDVSAYIPTNVISITDGQIFLQSDLFNANQRPAVDVGVSVSRVGGAAQVKSMKKVSGTLKLELAQYRDMQAFAMFASDLDAASRQQLTRGARLMELLKQGQYSPFPVENQVVSIWAGTNGYLDDVPVEDISRFETEFLEHLKHKSSILTTLAQTNVMDDDTAEALKTSIVAFKKGFFGEGDNLLVGAGHEEYAPIDEAQVDQEKIVKQKR</sequence>
<proteinExistence type="inferred from homology"/>
<name>ATPA_ARTS2</name>
<accession>A0JY66</accession>
<gene>
    <name evidence="1" type="primary">atpA</name>
    <name type="ordered locus">Arth_2607</name>
</gene>
<evidence type="ECO:0000255" key="1">
    <source>
        <dbReference type="HAMAP-Rule" id="MF_01346"/>
    </source>
</evidence>
<evidence type="ECO:0000305" key="2"/>
<comment type="function">
    <text evidence="1">Produces ATP from ADP in the presence of a proton gradient across the membrane. The alpha chain is a regulatory subunit.</text>
</comment>
<comment type="catalytic activity">
    <reaction evidence="1">
        <text>ATP + H2O + 4 H(+)(in) = ADP + phosphate + 5 H(+)(out)</text>
        <dbReference type="Rhea" id="RHEA:57720"/>
        <dbReference type="ChEBI" id="CHEBI:15377"/>
        <dbReference type="ChEBI" id="CHEBI:15378"/>
        <dbReference type="ChEBI" id="CHEBI:30616"/>
        <dbReference type="ChEBI" id="CHEBI:43474"/>
        <dbReference type="ChEBI" id="CHEBI:456216"/>
        <dbReference type="EC" id="7.1.2.2"/>
    </reaction>
</comment>
<comment type="subunit">
    <text evidence="1">F-type ATPases have 2 components, CF(1) - the catalytic core - and CF(0) - the membrane proton channel. CF(1) has five subunits: alpha(3), beta(3), gamma(1), delta(1), epsilon(1). CF(0) has three main subunits: a(1), b(2) and c(9-12). The alpha and beta chains form an alternating ring which encloses part of the gamma chain. CF(1) is attached to CF(0) by a central stalk formed by the gamma and epsilon chains, while a peripheral stalk is formed by the delta and b chains.</text>
</comment>
<comment type="subcellular location">
    <subcellularLocation>
        <location evidence="1">Cell membrane</location>
        <topology evidence="1">Peripheral membrane protein</topology>
    </subcellularLocation>
</comment>
<comment type="similarity">
    <text evidence="1">Belongs to the ATPase alpha/beta chains family.</text>
</comment>
<comment type="sequence caution" evidence="2">
    <conflict type="erroneous initiation">
        <sequence resource="EMBL-CDS" id="ABK03986"/>
    </conflict>
</comment>
<keyword id="KW-0066">ATP synthesis</keyword>
<keyword id="KW-0067">ATP-binding</keyword>
<keyword id="KW-1003">Cell membrane</keyword>
<keyword id="KW-0139">CF(1)</keyword>
<keyword id="KW-0375">Hydrogen ion transport</keyword>
<keyword id="KW-0406">Ion transport</keyword>
<keyword id="KW-0472">Membrane</keyword>
<keyword id="KW-0547">Nucleotide-binding</keyword>
<keyword id="KW-1185">Reference proteome</keyword>
<keyword id="KW-1278">Translocase</keyword>
<keyword id="KW-0813">Transport</keyword>